<reference key="1">
    <citation type="journal article" date="2002" name="EMBO J.">
        <title>Defects in cytokinesis, actin reorganization and the contractile vacuole in cells deficient in RhoGDI.</title>
        <authorList>
            <person name="Rivero F."/>
            <person name="Illenberger D."/>
            <person name="Somesh B.P."/>
            <person name="Dislich H."/>
            <person name="Adam N."/>
            <person name="Meyer A.-K."/>
        </authorList>
    </citation>
    <scope>NUCLEOTIDE SEQUENCE [GENOMIC DNA]</scope>
</reference>
<reference key="2">
    <citation type="journal article" date="2005" name="Nature">
        <title>The genome of the social amoeba Dictyostelium discoideum.</title>
        <authorList>
            <person name="Eichinger L."/>
            <person name="Pachebat J.A."/>
            <person name="Gloeckner G."/>
            <person name="Rajandream M.A."/>
            <person name="Sucgang R."/>
            <person name="Berriman M."/>
            <person name="Song J."/>
            <person name="Olsen R."/>
            <person name="Szafranski K."/>
            <person name="Xu Q."/>
            <person name="Tunggal B."/>
            <person name="Kummerfeld S."/>
            <person name="Madera M."/>
            <person name="Konfortov B.A."/>
            <person name="Rivero F."/>
            <person name="Bankier A.T."/>
            <person name="Lehmann R."/>
            <person name="Hamlin N."/>
            <person name="Davies R."/>
            <person name="Gaudet P."/>
            <person name="Fey P."/>
            <person name="Pilcher K."/>
            <person name="Chen G."/>
            <person name="Saunders D."/>
            <person name="Sodergren E.J."/>
            <person name="Davis P."/>
            <person name="Kerhornou A."/>
            <person name="Nie X."/>
            <person name="Hall N."/>
            <person name="Anjard C."/>
            <person name="Hemphill L."/>
            <person name="Bason N."/>
            <person name="Farbrother P."/>
            <person name="Desany B."/>
            <person name="Just E."/>
            <person name="Morio T."/>
            <person name="Rost R."/>
            <person name="Churcher C.M."/>
            <person name="Cooper J."/>
            <person name="Haydock S."/>
            <person name="van Driessche N."/>
            <person name="Cronin A."/>
            <person name="Goodhead I."/>
            <person name="Muzny D.M."/>
            <person name="Mourier T."/>
            <person name="Pain A."/>
            <person name="Lu M."/>
            <person name="Harper D."/>
            <person name="Lindsay R."/>
            <person name="Hauser H."/>
            <person name="James K.D."/>
            <person name="Quiles M."/>
            <person name="Madan Babu M."/>
            <person name="Saito T."/>
            <person name="Buchrieser C."/>
            <person name="Wardroper A."/>
            <person name="Felder M."/>
            <person name="Thangavelu M."/>
            <person name="Johnson D."/>
            <person name="Knights A."/>
            <person name="Loulseged H."/>
            <person name="Mungall K.L."/>
            <person name="Oliver K."/>
            <person name="Price C."/>
            <person name="Quail M.A."/>
            <person name="Urushihara H."/>
            <person name="Hernandez J."/>
            <person name="Rabbinowitsch E."/>
            <person name="Steffen D."/>
            <person name="Sanders M."/>
            <person name="Ma J."/>
            <person name="Kohara Y."/>
            <person name="Sharp S."/>
            <person name="Simmonds M.N."/>
            <person name="Spiegler S."/>
            <person name="Tivey A."/>
            <person name="Sugano S."/>
            <person name="White B."/>
            <person name="Walker D."/>
            <person name="Woodward J.R."/>
            <person name="Winckler T."/>
            <person name="Tanaka Y."/>
            <person name="Shaulsky G."/>
            <person name="Schleicher M."/>
            <person name="Weinstock G.M."/>
            <person name="Rosenthal A."/>
            <person name="Cox E.C."/>
            <person name="Chisholm R.L."/>
            <person name="Gibbs R.A."/>
            <person name="Loomis W.F."/>
            <person name="Platzer M."/>
            <person name="Kay R.R."/>
            <person name="Williams J.G."/>
            <person name="Dear P.H."/>
            <person name="Noegel A.A."/>
            <person name="Barrell B.G."/>
            <person name="Kuspa A."/>
        </authorList>
    </citation>
    <scope>NUCLEOTIDE SEQUENCE [LARGE SCALE GENOMIC DNA]</scope>
    <source>
        <strain>AX4</strain>
    </source>
</reference>
<proteinExistence type="inferred from homology"/>
<sequence>MINHNIISFKKFEAIFEQRPGGLELNMPIEIGSNNVDLTSKPFNIKGGSHYKVKIGYMASEPITDLICQIHTFRKSTPYGRDTQKVGDICANTNDLEFDFPKFGWEQASTQSSSMGDYTIKMYFKGNGNQDLATFFYSFNVAPDWENALPIN</sequence>
<comment type="function">
    <text evidence="1">Regulates the GDP/GTP exchange reaction of the Rho proteins by inhibiting the dissociation of GDP from them, and the subsequent binding of GTP to them.</text>
</comment>
<comment type="subcellular location">
    <subcellularLocation>
        <location evidence="1">Cytoplasm</location>
    </subcellularLocation>
</comment>
<comment type="similarity">
    <text evidence="2">Belongs to the Rho GDI family.</text>
</comment>
<dbReference type="EMBL" id="AY044086">
    <property type="protein sequence ID" value="AAK95685.1"/>
    <property type="molecule type" value="Genomic_DNA"/>
</dbReference>
<dbReference type="EMBL" id="AAFI02000035">
    <property type="protein sequence ID" value="EAL67251.1"/>
    <property type="molecule type" value="Genomic_DNA"/>
</dbReference>
<dbReference type="RefSeq" id="XP_641387.1">
    <property type="nucleotide sequence ID" value="XM_636295.1"/>
</dbReference>
<dbReference type="SMR" id="Q95UP9"/>
<dbReference type="FunCoup" id="Q95UP9">
    <property type="interactions" value="712"/>
</dbReference>
<dbReference type="STRING" id="44689.Q95UP9"/>
<dbReference type="PaxDb" id="44689-DDB0214829"/>
<dbReference type="EnsemblProtists" id="EAL67251">
    <property type="protein sequence ID" value="EAL67251"/>
    <property type="gene ID" value="DDB_G0280049"/>
</dbReference>
<dbReference type="GeneID" id="8622521"/>
<dbReference type="KEGG" id="ddi:DDB_G0280049"/>
<dbReference type="dictyBase" id="DDB_G0280049">
    <property type="gene designation" value="rdiB"/>
</dbReference>
<dbReference type="VEuPathDB" id="AmoebaDB:DDB_G0280049"/>
<dbReference type="eggNOG" id="ENOG502RHIB">
    <property type="taxonomic scope" value="Eukaryota"/>
</dbReference>
<dbReference type="HOGENOM" id="CLU_1725720_0_0_1"/>
<dbReference type="InParanoid" id="Q95UP9"/>
<dbReference type="OMA" id="GDICANT"/>
<dbReference type="PhylomeDB" id="Q95UP9"/>
<dbReference type="Reactome" id="R-DDI-9013148">
    <property type="pathway name" value="CDC42 GTPase cycle"/>
</dbReference>
<dbReference type="Reactome" id="R-DDI-9013149">
    <property type="pathway name" value="RAC1 GTPase cycle"/>
</dbReference>
<dbReference type="Reactome" id="R-DDI-9013404">
    <property type="pathway name" value="RAC2 GTPase cycle"/>
</dbReference>
<dbReference type="Reactome" id="R-DDI-9013407">
    <property type="pathway name" value="RHOH GTPase cycle"/>
</dbReference>
<dbReference type="Reactome" id="R-DDI-9013408">
    <property type="pathway name" value="RHOG GTPase cycle"/>
</dbReference>
<dbReference type="Reactome" id="R-DDI-9013423">
    <property type="pathway name" value="RAC3 GTPase cycle"/>
</dbReference>
<dbReference type="PRO" id="PR:Q95UP9"/>
<dbReference type="Proteomes" id="UP000002195">
    <property type="component" value="Chromosome 3"/>
</dbReference>
<dbReference type="GO" id="GO:0005829">
    <property type="term" value="C:cytosol"/>
    <property type="evidence" value="ECO:0000314"/>
    <property type="project" value="dictyBase"/>
</dbReference>
<dbReference type="GO" id="GO:0016020">
    <property type="term" value="C:membrane"/>
    <property type="evidence" value="ECO:0000318"/>
    <property type="project" value="GO_Central"/>
</dbReference>
<dbReference type="GO" id="GO:0005096">
    <property type="term" value="F:GTPase activator activity"/>
    <property type="evidence" value="ECO:0007669"/>
    <property type="project" value="UniProtKB-KW"/>
</dbReference>
<dbReference type="GO" id="GO:0005094">
    <property type="term" value="F:Rho GDP-dissociation inhibitor activity"/>
    <property type="evidence" value="ECO:0000318"/>
    <property type="project" value="GO_Central"/>
</dbReference>
<dbReference type="GO" id="GO:0035023">
    <property type="term" value="P:regulation of Rho protein signal transduction"/>
    <property type="evidence" value="ECO:0000304"/>
    <property type="project" value="dictyBase"/>
</dbReference>
<dbReference type="GO" id="GO:0007266">
    <property type="term" value="P:Rho protein signal transduction"/>
    <property type="evidence" value="ECO:0000318"/>
    <property type="project" value="GO_Central"/>
</dbReference>
<dbReference type="FunFam" id="2.70.50.30:FF:000014">
    <property type="match status" value="1"/>
</dbReference>
<dbReference type="Gene3D" id="2.70.50.30">
    <property type="entry name" value="Coagulation Factor XIII, subunit A, domain 1"/>
    <property type="match status" value="1"/>
</dbReference>
<dbReference type="InterPro" id="IPR014756">
    <property type="entry name" value="Ig_E-set"/>
</dbReference>
<dbReference type="InterPro" id="IPR024792">
    <property type="entry name" value="RhoGDI_dom_sf"/>
</dbReference>
<dbReference type="SUPFAM" id="SSF81296">
    <property type="entry name" value="E set domains"/>
    <property type="match status" value="1"/>
</dbReference>
<gene>
    <name type="primary">rdiB</name>
    <name type="synonym">RhoGDI2</name>
    <name type="ORF">DDB_G0280049</name>
</gene>
<evidence type="ECO:0000250" key="1"/>
<evidence type="ECO:0000305" key="2"/>
<protein>
    <recommendedName>
        <fullName>Putative rho GDP-dissociation inhibitor 2</fullName>
    </recommendedName>
</protein>
<keyword id="KW-0963">Cytoplasm</keyword>
<keyword id="KW-0343">GTPase activation</keyword>
<keyword id="KW-1185">Reference proteome</keyword>
<feature type="chain" id="PRO_0000365603" description="Putative rho GDP-dissociation inhibitor 2">
    <location>
        <begin position="1"/>
        <end position="152"/>
    </location>
</feature>
<organism>
    <name type="scientific">Dictyostelium discoideum</name>
    <name type="common">Social amoeba</name>
    <dbReference type="NCBI Taxonomy" id="44689"/>
    <lineage>
        <taxon>Eukaryota</taxon>
        <taxon>Amoebozoa</taxon>
        <taxon>Evosea</taxon>
        <taxon>Eumycetozoa</taxon>
        <taxon>Dictyostelia</taxon>
        <taxon>Dictyosteliales</taxon>
        <taxon>Dictyosteliaceae</taxon>
        <taxon>Dictyostelium</taxon>
    </lineage>
</organism>
<accession>Q95UP9</accession>
<accession>Q54VG8</accession>
<name>GDIR2_DICDI</name>